<evidence type="ECO:0000255" key="1">
    <source>
        <dbReference type="HAMAP-Rule" id="MF_01005"/>
    </source>
</evidence>
<gene>
    <name evidence="1" type="primary">btuD</name>
    <name type="ordered locus">UTI89_C1902</name>
</gene>
<proteinExistence type="inferred from homology"/>
<organism>
    <name type="scientific">Escherichia coli (strain UTI89 / UPEC)</name>
    <dbReference type="NCBI Taxonomy" id="364106"/>
    <lineage>
        <taxon>Bacteria</taxon>
        <taxon>Pseudomonadati</taxon>
        <taxon>Pseudomonadota</taxon>
        <taxon>Gammaproteobacteria</taxon>
        <taxon>Enterobacterales</taxon>
        <taxon>Enterobacteriaceae</taxon>
        <taxon>Escherichia</taxon>
    </lineage>
</organism>
<dbReference type="EC" id="7.6.2.8" evidence="1"/>
<dbReference type="EMBL" id="CP000243">
    <property type="protein sequence ID" value="ABE07378.1"/>
    <property type="molecule type" value="Genomic_DNA"/>
</dbReference>
<dbReference type="RefSeq" id="WP_000029464.1">
    <property type="nucleotide sequence ID" value="NZ_CP064825.1"/>
</dbReference>
<dbReference type="SMR" id="Q1RB86"/>
<dbReference type="KEGG" id="eci:UTI89_C1902"/>
<dbReference type="HOGENOM" id="CLU_000604_1_11_6"/>
<dbReference type="Proteomes" id="UP000001952">
    <property type="component" value="Chromosome"/>
</dbReference>
<dbReference type="GO" id="GO:0005886">
    <property type="term" value="C:plasma membrane"/>
    <property type="evidence" value="ECO:0007669"/>
    <property type="project" value="UniProtKB-SubCell"/>
</dbReference>
<dbReference type="GO" id="GO:0015420">
    <property type="term" value="F:ABC-type vitamin B12 transporter activity"/>
    <property type="evidence" value="ECO:0007669"/>
    <property type="project" value="UniProtKB-UniRule"/>
</dbReference>
<dbReference type="GO" id="GO:0005524">
    <property type="term" value="F:ATP binding"/>
    <property type="evidence" value="ECO:0007669"/>
    <property type="project" value="UniProtKB-KW"/>
</dbReference>
<dbReference type="GO" id="GO:0016887">
    <property type="term" value="F:ATP hydrolysis activity"/>
    <property type="evidence" value="ECO:0007669"/>
    <property type="project" value="InterPro"/>
</dbReference>
<dbReference type="CDD" id="cd03214">
    <property type="entry name" value="ABC_Iron-Siderophores_B12_Hemin"/>
    <property type="match status" value="1"/>
</dbReference>
<dbReference type="FunFam" id="3.40.50.300:FF:000462">
    <property type="entry name" value="Vitamin B12 import ATP-binding protein BtuD"/>
    <property type="match status" value="1"/>
</dbReference>
<dbReference type="Gene3D" id="3.40.50.300">
    <property type="entry name" value="P-loop containing nucleotide triphosphate hydrolases"/>
    <property type="match status" value="1"/>
</dbReference>
<dbReference type="HAMAP" id="MF_01005">
    <property type="entry name" value="BtuD"/>
    <property type="match status" value="1"/>
</dbReference>
<dbReference type="InterPro" id="IPR003593">
    <property type="entry name" value="AAA+_ATPase"/>
</dbReference>
<dbReference type="InterPro" id="IPR003439">
    <property type="entry name" value="ABC_transporter-like_ATP-bd"/>
</dbReference>
<dbReference type="InterPro" id="IPR017871">
    <property type="entry name" value="ABC_transporter-like_CS"/>
</dbReference>
<dbReference type="InterPro" id="IPR023693">
    <property type="entry name" value="ABC_transptr_BtuD"/>
</dbReference>
<dbReference type="InterPro" id="IPR050153">
    <property type="entry name" value="Metal_Ion_Import_ABC"/>
</dbReference>
<dbReference type="InterPro" id="IPR027417">
    <property type="entry name" value="P-loop_NTPase"/>
</dbReference>
<dbReference type="NCBIfam" id="NF002981">
    <property type="entry name" value="PRK03695.1"/>
    <property type="match status" value="1"/>
</dbReference>
<dbReference type="PANTHER" id="PTHR42734">
    <property type="entry name" value="METAL TRANSPORT SYSTEM ATP-BINDING PROTEIN TM_0124-RELATED"/>
    <property type="match status" value="1"/>
</dbReference>
<dbReference type="PANTHER" id="PTHR42734:SF18">
    <property type="entry name" value="VITAMIN B12 IMPORT ATP-BINDING PROTEIN BTUD"/>
    <property type="match status" value="1"/>
</dbReference>
<dbReference type="Pfam" id="PF00005">
    <property type="entry name" value="ABC_tran"/>
    <property type="match status" value="1"/>
</dbReference>
<dbReference type="SMART" id="SM00382">
    <property type="entry name" value="AAA"/>
    <property type="match status" value="1"/>
</dbReference>
<dbReference type="SUPFAM" id="SSF52540">
    <property type="entry name" value="P-loop containing nucleoside triphosphate hydrolases"/>
    <property type="match status" value="1"/>
</dbReference>
<dbReference type="PROSITE" id="PS00211">
    <property type="entry name" value="ABC_TRANSPORTER_1"/>
    <property type="match status" value="1"/>
</dbReference>
<dbReference type="PROSITE" id="PS50893">
    <property type="entry name" value="ABC_TRANSPORTER_2"/>
    <property type="match status" value="1"/>
</dbReference>
<keyword id="KW-0067">ATP-binding</keyword>
<keyword id="KW-0997">Cell inner membrane</keyword>
<keyword id="KW-1003">Cell membrane</keyword>
<keyword id="KW-0472">Membrane</keyword>
<keyword id="KW-0547">Nucleotide-binding</keyword>
<keyword id="KW-1278">Translocase</keyword>
<keyword id="KW-0813">Transport</keyword>
<protein>
    <recommendedName>
        <fullName evidence="1">Vitamin B12 import ATP-binding protein BtuD</fullName>
        <ecNumber evidence="1">7.6.2.8</ecNumber>
    </recommendedName>
    <alternativeName>
        <fullName evidence="1">Vitamin B12-transporting ATPase</fullName>
    </alternativeName>
</protein>
<comment type="function">
    <text evidence="1">Part of the ABC transporter complex BtuCDF involved in vitamin B12 import. Responsible for energy coupling to the transport system.</text>
</comment>
<comment type="catalytic activity">
    <reaction evidence="1">
        <text>an R-cob(III)alamin(out) + ATP + H2O = an R-cob(III)alamin(in) + ADP + phosphate + H(+)</text>
        <dbReference type="Rhea" id="RHEA:17873"/>
        <dbReference type="ChEBI" id="CHEBI:15377"/>
        <dbReference type="ChEBI" id="CHEBI:15378"/>
        <dbReference type="ChEBI" id="CHEBI:30616"/>
        <dbReference type="ChEBI" id="CHEBI:43474"/>
        <dbReference type="ChEBI" id="CHEBI:140785"/>
        <dbReference type="ChEBI" id="CHEBI:456216"/>
        <dbReference type="EC" id="7.6.2.8"/>
    </reaction>
</comment>
<comment type="subunit">
    <text evidence="1">The complex is composed of two ATP-binding proteins (BtuD), two transmembrane proteins (BtuC) and a solute-binding protein (BtuF).</text>
</comment>
<comment type="subcellular location">
    <subcellularLocation>
        <location evidence="1">Cell inner membrane</location>
        <topology evidence="1">Peripheral membrane protein</topology>
    </subcellularLocation>
</comment>
<comment type="similarity">
    <text evidence="1">Belongs to the ABC transporter superfamily. Vitamin B12 importer (TC 3.A.1.13.1) family.</text>
</comment>
<reference key="1">
    <citation type="journal article" date="2006" name="Proc. Natl. Acad. Sci. U.S.A.">
        <title>Identification of genes subject to positive selection in uropathogenic strains of Escherichia coli: a comparative genomics approach.</title>
        <authorList>
            <person name="Chen S.L."/>
            <person name="Hung C.-S."/>
            <person name="Xu J."/>
            <person name="Reigstad C.S."/>
            <person name="Magrini V."/>
            <person name="Sabo A."/>
            <person name="Blasiar D."/>
            <person name="Bieri T."/>
            <person name="Meyer R.R."/>
            <person name="Ozersky P."/>
            <person name="Armstrong J.R."/>
            <person name="Fulton R.S."/>
            <person name="Latreille J.P."/>
            <person name="Spieth J."/>
            <person name="Hooton T.M."/>
            <person name="Mardis E.R."/>
            <person name="Hultgren S.J."/>
            <person name="Gordon J.I."/>
        </authorList>
    </citation>
    <scope>NUCLEOTIDE SEQUENCE [LARGE SCALE GENOMIC DNA]</scope>
    <source>
        <strain>UTI89 / UPEC</strain>
    </source>
</reference>
<accession>Q1RB86</accession>
<feature type="chain" id="PRO_1000083964" description="Vitamin B12 import ATP-binding protein BtuD">
    <location>
        <begin position="1"/>
        <end position="249"/>
    </location>
</feature>
<feature type="domain" description="ABC transporter" evidence="1">
    <location>
        <begin position="1"/>
        <end position="233"/>
    </location>
</feature>
<feature type="binding site" evidence="1">
    <location>
        <begin position="33"/>
        <end position="40"/>
    </location>
    <ligand>
        <name>ATP</name>
        <dbReference type="ChEBI" id="CHEBI:30616"/>
    </ligand>
</feature>
<sequence length="249" mass="27085">MSIVMQLQDVAESTRLGPLSGEVRAGEILHLVGPNGAGKSTLLARMAGMTSGKGSIQFAGQPLEAWSATKLALHRAYLSQQQTPPFAMPVWHYLTLHQHDKTRTELLNDVAGALALDDKLGRSTNQLSGGEWQRVRLAAVVLQITPQANPAGQLLLLDEPMNSLDVAQQSALDKILSALCQQGLAIVMSSHDLNHTLRHAHRAWLLKGGKMLASGRREEVLTPANLAQAYGMNFRRLDIEGHRMLISTI</sequence>
<name>BTUD_ECOUT</name>